<protein>
    <recommendedName>
        <fullName evidence="1">Ribosomal protein uS12 methylthiotransferase RimO</fullName>
        <shortName evidence="1">uS12 MTTase</shortName>
        <shortName evidence="1">uS12 methylthiotransferase</shortName>
        <ecNumber evidence="1">2.8.4.4</ecNumber>
    </recommendedName>
    <alternativeName>
        <fullName evidence="1">Ribosomal protein uS12 (aspartate-C(3))-methylthiotransferase</fullName>
    </alternativeName>
    <alternativeName>
        <fullName evidence="1">Ribosome maturation factor RimO</fullName>
    </alternativeName>
</protein>
<dbReference type="EC" id="2.8.4.4" evidence="1"/>
<dbReference type="EMBL" id="CP000939">
    <property type="protein sequence ID" value="ACA43904.1"/>
    <property type="molecule type" value="Genomic_DNA"/>
</dbReference>
<dbReference type="RefSeq" id="WP_015957518.1">
    <property type="nucleotide sequence ID" value="NC_010516.1"/>
</dbReference>
<dbReference type="SMR" id="B1II37"/>
<dbReference type="KEGG" id="cbb:CLD_2234"/>
<dbReference type="HOGENOM" id="CLU_018697_0_1_9"/>
<dbReference type="Proteomes" id="UP000008541">
    <property type="component" value="Chromosome"/>
</dbReference>
<dbReference type="GO" id="GO:0005829">
    <property type="term" value="C:cytosol"/>
    <property type="evidence" value="ECO:0007669"/>
    <property type="project" value="TreeGrafter"/>
</dbReference>
<dbReference type="GO" id="GO:0051539">
    <property type="term" value="F:4 iron, 4 sulfur cluster binding"/>
    <property type="evidence" value="ECO:0007669"/>
    <property type="project" value="UniProtKB-UniRule"/>
</dbReference>
<dbReference type="GO" id="GO:0035599">
    <property type="term" value="F:aspartic acid methylthiotransferase activity"/>
    <property type="evidence" value="ECO:0007669"/>
    <property type="project" value="TreeGrafter"/>
</dbReference>
<dbReference type="GO" id="GO:0046872">
    <property type="term" value="F:metal ion binding"/>
    <property type="evidence" value="ECO:0007669"/>
    <property type="project" value="UniProtKB-KW"/>
</dbReference>
<dbReference type="GO" id="GO:0103039">
    <property type="term" value="F:protein methylthiotransferase activity"/>
    <property type="evidence" value="ECO:0007669"/>
    <property type="project" value="UniProtKB-EC"/>
</dbReference>
<dbReference type="GO" id="GO:0006400">
    <property type="term" value="P:tRNA modification"/>
    <property type="evidence" value="ECO:0007669"/>
    <property type="project" value="InterPro"/>
</dbReference>
<dbReference type="CDD" id="cd01335">
    <property type="entry name" value="Radical_SAM"/>
    <property type="match status" value="1"/>
</dbReference>
<dbReference type="FunFam" id="2.40.50.140:FF:000210">
    <property type="entry name" value="Ribosomal protein S12 methylthiotransferase RimO"/>
    <property type="match status" value="1"/>
</dbReference>
<dbReference type="FunFam" id="3.40.50.12160:FF:000002">
    <property type="entry name" value="Ribosomal protein S12 methylthiotransferase RimO"/>
    <property type="match status" value="1"/>
</dbReference>
<dbReference type="FunFam" id="3.80.30.20:FF:000001">
    <property type="entry name" value="tRNA-2-methylthio-N(6)-dimethylallyladenosine synthase 2"/>
    <property type="match status" value="1"/>
</dbReference>
<dbReference type="Gene3D" id="3.40.50.12160">
    <property type="entry name" value="Methylthiotransferase, N-terminal domain"/>
    <property type="match status" value="1"/>
</dbReference>
<dbReference type="Gene3D" id="2.40.50.140">
    <property type="entry name" value="Nucleic acid-binding proteins"/>
    <property type="match status" value="1"/>
</dbReference>
<dbReference type="Gene3D" id="3.80.30.20">
    <property type="entry name" value="tm_1862 like domain"/>
    <property type="match status" value="1"/>
</dbReference>
<dbReference type="HAMAP" id="MF_01865">
    <property type="entry name" value="MTTase_RimO"/>
    <property type="match status" value="1"/>
</dbReference>
<dbReference type="InterPro" id="IPR006638">
    <property type="entry name" value="Elp3/MiaA/NifB-like_rSAM"/>
</dbReference>
<dbReference type="InterPro" id="IPR005839">
    <property type="entry name" value="Methylthiotransferase"/>
</dbReference>
<dbReference type="InterPro" id="IPR020612">
    <property type="entry name" value="Methylthiotransferase_CS"/>
</dbReference>
<dbReference type="InterPro" id="IPR013848">
    <property type="entry name" value="Methylthiotransferase_N"/>
</dbReference>
<dbReference type="InterPro" id="IPR038135">
    <property type="entry name" value="Methylthiotransferase_N_sf"/>
</dbReference>
<dbReference type="InterPro" id="IPR012340">
    <property type="entry name" value="NA-bd_OB-fold"/>
</dbReference>
<dbReference type="InterPro" id="IPR005840">
    <property type="entry name" value="Ribosomal_uS12_MeSTrfase_RimO"/>
</dbReference>
<dbReference type="InterPro" id="IPR007197">
    <property type="entry name" value="rSAM"/>
</dbReference>
<dbReference type="InterPro" id="IPR023404">
    <property type="entry name" value="rSAM_horseshoe"/>
</dbReference>
<dbReference type="InterPro" id="IPR002792">
    <property type="entry name" value="TRAM_dom"/>
</dbReference>
<dbReference type="NCBIfam" id="TIGR01125">
    <property type="entry name" value="30S ribosomal protein S12 methylthiotransferase RimO"/>
    <property type="match status" value="1"/>
</dbReference>
<dbReference type="NCBIfam" id="TIGR00089">
    <property type="entry name" value="MiaB/RimO family radical SAM methylthiotransferase"/>
    <property type="match status" value="1"/>
</dbReference>
<dbReference type="PANTHER" id="PTHR43837">
    <property type="entry name" value="RIBOSOMAL PROTEIN S12 METHYLTHIOTRANSFERASE RIMO"/>
    <property type="match status" value="1"/>
</dbReference>
<dbReference type="PANTHER" id="PTHR43837:SF1">
    <property type="entry name" value="RIBOSOMAL PROTEIN US12 METHYLTHIOTRANSFERASE RIMO"/>
    <property type="match status" value="1"/>
</dbReference>
<dbReference type="Pfam" id="PF04055">
    <property type="entry name" value="Radical_SAM"/>
    <property type="match status" value="1"/>
</dbReference>
<dbReference type="Pfam" id="PF18693">
    <property type="entry name" value="TRAM_2"/>
    <property type="match status" value="1"/>
</dbReference>
<dbReference type="Pfam" id="PF00919">
    <property type="entry name" value="UPF0004"/>
    <property type="match status" value="1"/>
</dbReference>
<dbReference type="SFLD" id="SFLDG01082">
    <property type="entry name" value="B12-binding_domain_containing"/>
    <property type="match status" value="1"/>
</dbReference>
<dbReference type="SFLD" id="SFLDG01061">
    <property type="entry name" value="methylthiotransferase"/>
    <property type="match status" value="1"/>
</dbReference>
<dbReference type="SFLD" id="SFLDF00274">
    <property type="entry name" value="ribosomal_protein_S12_methylth"/>
    <property type="match status" value="1"/>
</dbReference>
<dbReference type="SMART" id="SM00729">
    <property type="entry name" value="Elp3"/>
    <property type="match status" value="1"/>
</dbReference>
<dbReference type="SUPFAM" id="SSF102114">
    <property type="entry name" value="Radical SAM enzymes"/>
    <property type="match status" value="1"/>
</dbReference>
<dbReference type="PROSITE" id="PS51449">
    <property type="entry name" value="MTTASE_N"/>
    <property type="match status" value="1"/>
</dbReference>
<dbReference type="PROSITE" id="PS01278">
    <property type="entry name" value="MTTASE_RADICAL"/>
    <property type="match status" value="1"/>
</dbReference>
<dbReference type="PROSITE" id="PS51918">
    <property type="entry name" value="RADICAL_SAM"/>
    <property type="match status" value="1"/>
</dbReference>
<dbReference type="PROSITE" id="PS50926">
    <property type="entry name" value="TRAM"/>
    <property type="match status" value="1"/>
</dbReference>
<sequence>MEKIKVALVSLGCDKNRIDSELMLYKLNEEAELVKNPKEAQVIIVNTCGFIETAKEESINTILQMASYKKTHNCKVLVVTGCLTQRYKGELKELIPEMDIMLGVNDYDKLLESIKVFLKSGEKSFYHKYSDTKINEGNRILTTPTYTAYVRIAEGCNNFCTYCAIPRIRGKYRSRKKENILKEVENLAKQGVKEIILIAQDTTMYGIDIYGKKVLHELLRDISKVEGVKWIRLLYCYPEEITKELIEEIKNNDKVCKYLDLPIQQISNSVLKRMGRKTTKETIINIIKKLRKEIEGITLRTSLIVGFPGETEGEFSELKEFVSDVKLDKLGVFKYSKEEGTSAALMEEQIDEEIKEKREEEIMILQQSISKDINKEKIGKIYEVIVEGIKEDMYYGRNYEMSPEIDGEIYFEKDENVRIGDIIKVKVTHSLEYDLIGVVYNELSK</sequence>
<keyword id="KW-0004">4Fe-4S</keyword>
<keyword id="KW-0963">Cytoplasm</keyword>
<keyword id="KW-0408">Iron</keyword>
<keyword id="KW-0411">Iron-sulfur</keyword>
<keyword id="KW-0479">Metal-binding</keyword>
<keyword id="KW-0949">S-adenosyl-L-methionine</keyword>
<keyword id="KW-0808">Transferase</keyword>
<gene>
    <name evidence="1" type="primary">rimO</name>
    <name type="ordered locus">CLD_2234</name>
</gene>
<accession>B1II37</accession>
<organism>
    <name type="scientific">Clostridium botulinum (strain Okra / Type B1)</name>
    <dbReference type="NCBI Taxonomy" id="498213"/>
    <lineage>
        <taxon>Bacteria</taxon>
        <taxon>Bacillati</taxon>
        <taxon>Bacillota</taxon>
        <taxon>Clostridia</taxon>
        <taxon>Eubacteriales</taxon>
        <taxon>Clostridiaceae</taxon>
        <taxon>Clostridium</taxon>
    </lineage>
</organism>
<evidence type="ECO:0000255" key="1">
    <source>
        <dbReference type="HAMAP-Rule" id="MF_01865"/>
    </source>
</evidence>
<evidence type="ECO:0000255" key="2">
    <source>
        <dbReference type="PROSITE-ProRule" id="PRU01266"/>
    </source>
</evidence>
<proteinExistence type="inferred from homology"/>
<comment type="function">
    <text evidence="1">Catalyzes the methylthiolation of an aspartic acid residue of ribosomal protein uS12.</text>
</comment>
<comment type="catalytic activity">
    <reaction evidence="1">
        <text>L-aspartate(89)-[ribosomal protein uS12]-hydrogen + (sulfur carrier)-SH + AH2 + 2 S-adenosyl-L-methionine = 3-methylsulfanyl-L-aspartate(89)-[ribosomal protein uS12]-hydrogen + (sulfur carrier)-H + 5'-deoxyadenosine + L-methionine + A + S-adenosyl-L-homocysteine + 2 H(+)</text>
        <dbReference type="Rhea" id="RHEA:37087"/>
        <dbReference type="Rhea" id="RHEA-COMP:10460"/>
        <dbReference type="Rhea" id="RHEA-COMP:10461"/>
        <dbReference type="Rhea" id="RHEA-COMP:14737"/>
        <dbReference type="Rhea" id="RHEA-COMP:14739"/>
        <dbReference type="ChEBI" id="CHEBI:13193"/>
        <dbReference type="ChEBI" id="CHEBI:15378"/>
        <dbReference type="ChEBI" id="CHEBI:17319"/>
        <dbReference type="ChEBI" id="CHEBI:17499"/>
        <dbReference type="ChEBI" id="CHEBI:29917"/>
        <dbReference type="ChEBI" id="CHEBI:29961"/>
        <dbReference type="ChEBI" id="CHEBI:57844"/>
        <dbReference type="ChEBI" id="CHEBI:57856"/>
        <dbReference type="ChEBI" id="CHEBI:59789"/>
        <dbReference type="ChEBI" id="CHEBI:64428"/>
        <dbReference type="ChEBI" id="CHEBI:73599"/>
        <dbReference type="EC" id="2.8.4.4"/>
    </reaction>
</comment>
<comment type="cofactor">
    <cofactor evidence="1">
        <name>[4Fe-4S] cluster</name>
        <dbReference type="ChEBI" id="CHEBI:49883"/>
    </cofactor>
    <text evidence="1">Binds 2 [4Fe-4S] clusters. One cluster is coordinated with 3 cysteines and an exchangeable S-adenosyl-L-methionine.</text>
</comment>
<comment type="subcellular location">
    <subcellularLocation>
        <location evidence="1">Cytoplasm</location>
    </subcellularLocation>
</comment>
<comment type="similarity">
    <text evidence="1">Belongs to the methylthiotransferase family. RimO subfamily.</text>
</comment>
<name>RIMO_CLOBK</name>
<reference key="1">
    <citation type="journal article" date="2007" name="PLoS ONE">
        <title>Analysis of the neurotoxin complex genes in Clostridium botulinum A1-A4 and B1 strains: BoNT/A3, /Ba4 and /B1 clusters are located within plasmids.</title>
        <authorList>
            <person name="Smith T.J."/>
            <person name="Hill K.K."/>
            <person name="Foley B.T."/>
            <person name="Detter J.C."/>
            <person name="Munk A.C."/>
            <person name="Bruce D.C."/>
            <person name="Doggett N.A."/>
            <person name="Smith L.A."/>
            <person name="Marks J.D."/>
            <person name="Xie G."/>
            <person name="Brettin T.S."/>
        </authorList>
    </citation>
    <scope>NUCLEOTIDE SEQUENCE [LARGE SCALE GENOMIC DNA]</scope>
    <source>
        <strain>Okra / Type B1</strain>
    </source>
</reference>
<feature type="chain" id="PRO_0000374782" description="Ribosomal protein uS12 methylthiotransferase RimO">
    <location>
        <begin position="1"/>
        <end position="445"/>
    </location>
</feature>
<feature type="domain" description="MTTase N-terminal" evidence="1">
    <location>
        <begin position="4"/>
        <end position="119"/>
    </location>
</feature>
<feature type="domain" description="Radical SAM core" evidence="2">
    <location>
        <begin position="142"/>
        <end position="372"/>
    </location>
</feature>
<feature type="domain" description="TRAM" evidence="1">
    <location>
        <begin position="375"/>
        <end position="441"/>
    </location>
</feature>
<feature type="binding site" evidence="1">
    <location>
        <position position="13"/>
    </location>
    <ligand>
        <name>[4Fe-4S] cluster</name>
        <dbReference type="ChEBI" id="CHEBI:49883"/>
        <label>1</label>
    </ligand>
</feature>
<feature type="binding site" evidence="1">
    <location>
        <position position="48"/>
    </location>
    <ligand>
        <name>[4Fe-4S] cluster</name>
        <dbReference type="ChEBI" id="CHEBI:49883"/>
        <label>1</label>
    </ligand>
</feature>
<feature type="binding site" evidence="1">
    <location>
        <position position="82"/>
    </location>
    <ligand>
        <name>[4Fe-4S] cluster</name>
        <dbReference type="ChEBI" id="CHEBI:49883"/>
        <label>1</label>
    </ligand>
</feature>
<feature type="binding site" evidence="1">
    <location>
        <position position="156"/>
    </location>
    <ligand>
        <name>[4Fe-4S] cluster</name>
        <dbReference type="ChEBI" id="CHEBI:49883"/>
        <label>2</label>
        <note>4Fe-4S-S-AdoMet</note>
    </ligand>
</feature>
<feature type="binding site" evidence="1">
    <location>
        <position position="160"/>
    </location>
    <ligand>
        <name>[4Fe-4S] cluster</name>
        <dbReference type="ChEBI" id="CHEBI:49883"/>
        <label>2</label>
        <note>4Fe-4S-S-AdoMet</note>
    </ligand>
</feature>
<feature type="binding site" evidence="1">
    <location>
        <position position="163"/>
    </location>
    <ligand>
        <name>[4Fe-4S] cluster</name>
        <dbReference type="ChEBI" id="CHEBI:49883"/>
        <label>2</label>
        <note>4Fe-4S-S-AdoMet</note>
    </ligand>
</feature>